<name>HISZ_PSEPF</name>
<sequence length="395" mass="42851">MATVDRWLLPDGIEEVLPPEAARIEVARRQVLDLFQSWGYEFVVTPHIEYLESLLTGAGQDLDLRTFKVIDPQSGRQMGFRADITPQVARIDAHTLRREGPSRLCYAGSVLHAQPRALSSSRSPIQLGAELYGDASPSSDVEVISLMLAMLQLADVPDVHMDLGHVGIYRGLAQAAGLSGEVEQQLFDALQRKAIDEVITLTEGLPADLSGMLRALVDLCGGREVLSAARERLANAPAPVLAALEDLLAIAERLSVRFPELPLYFDLGELRGYHYHTGVVFAVFVPGVGQSIAQGGRYDDIGADFGRARPATGFSTDLKTLVTLGRAEIELPSGGIWMPDSTDAALWQQVCQLRSEGQRVVQALPGQPLAAARDADCDRQLIQQNGLWQVSPLAS</sequence>
<evidence type="ECO:0000255" key="1">
    <source>
        <dbReference type="HAMAP-Rule" id="MF_00125"/>
    </source>
</evidence>
<feature type="chain" id="PRO_0000242848" description="ATP phosphoribosyltransferase regulatory subunit">
    <location>
        <begin position="1"/>
        <end position="395"/>
    </location>
</feature>
<dbReference type="EMBL" id="CP000094">
    <property type="protein sequence ID" value="ABA72271.1"/>
    <property type="molecule type" value="Genomic_DNA"/>
</dbReference>
<dbReference type="RefSeq" id="WP_011332186.1">
    <property type="nucleotide sequence ID" value="NC_007492.2"/>
</dbReference>
<dbReference type="SMR" id="Q3KIY5"/>
<dbReference type="KEGG" id="pfo:Pfl01_0527"/>
<dbReference type="eggNOG" id="COG3705">
    <property type="taxonomic scope" value="Bacteria"/>
</dbReference>
<dbReference type="HOGENOM" id="CLU_025113_0_1_6"/>
<dbReference type="UniPathway" id="UPA00031">
    <property type="reaction ID" value="UER00006"/>
</dbReference>
<dbReference type="Proteomes" id="UP000002704">
    <property type="component" value="Chromosome"/>
</dbReference>
<dbReference type="GO" id="GO:0005737">
    <property type="term" value="C:cytoplasm"/>
    <property type="evidence" value="ECO:0007669"/>
    <property type="project" value="UniProtKB-SubCell"/>
</dbReference>
<dbReference type="GO" id="GO:0000105">
    <property type="term" value="P:L-histidine biosynthetic process"/>
    <property type="evidence" value="ECO:0007669"/>
    <property type="project" value="UniProtKB-UniRule"/>
</dbReference>
<dbReference type="CDD" id="cd00773">
    <property type="entry name" value="HisRS-like_core"/>
    <property type="match status" value="1"/>
</dbReference>
<dbReference type="Gene3D" id="3.30.930.10">
    <property type="entry name" value="Bira Bifunctional Protein, Domain 2"/>
    <property type="match status" value="1"/>
</dbReference>
<dbReference type="HAMAP" id="MF_00125">
    <property type="entry name" value="HisZ"/>
    <property type="match status" value="1"/>
</dbReference>
<dbReference type="InterPro" id="IPR045864">
    <property type="entry name" value="aa-tRNA-synth_II/BPL/LPL"/>
</dbReference>
<dbReference type="InterPro" id="IPR041715">
    <property type="entry name" value="HisRS-like_core"/>
</dbReference>
<dbReference type="InterPro" id="IPR004516">
    <property type="entry name" value="HisRS/HisZ"/>
</dbReference>
<dbReference type="InterPro" id="IPR004517">
    <property type="entry name" value="HisZ"/>
</dbReference>
<dbReference type="NCBIfam" id="TIGR00443">
    <property type="entry name" value="hisZ_biosyn_reg"/>
    <property type="match status" value="1"/>
</dbReference>
<dbReference type="NCBIfam" id="NF008935">
    <property type="entry name" value="PRK12292.1-1"/>
    <property type="match status" value="1"/>
</dbReference>
<dbReference type="NCBIfam" id="NF008937">
    <property type="entry name" value="PRK12292.1-4"/>
    <property type="match status" value="1"/>
</dbReference>
<dbReference type="NCBIfam" id="NF009086">
    <property type="entry name" value="PRK12421.1"/>
    <property type="match status" value="1"/>
</dbReference>
<dbReference type="PANTHER" id="PTHR11476:SF7">
    <property type="entry name" value="HISTIDINE--TRNA LIGASE"/>
    <property type="match status" value="1"/>
</dbReference>
<dbReference type="PANTHER" id="PTHR11476">
    <property type="entry name" value="HISTIDYL-TRNA SYNTHETASE"/>
    <property type="match status" value="1"/>
</dbReference>
<dbReference type="Pfam" id="PF13393">
    <property type="entry name" value="tRNA-synt_His"/>
    <property type="match status" value="1"/>
</dbReference>
<dbReference type="PIRSF" id="PIRSF001549">
    <property type="entry name" value="His-tRNA_synth"/>
    <property type="match status" value="1"/>
</dbReference>
<dbReference type="SUPFAM" id="SSF55681">
    <property type="entry name" value="Class II aaRS and biotin synthetases"/>
    <property type="match status" value="1"/>
</dbReference>
<proteinExistence type="inferred from homology"/>
<reference key="1">
    <citation type="journal article" date="2009" name="Genome Biol.">
        <title>Genomic and genetic analyses of diversity and plant interactions of Pseudomonas fluorescens.</title>
        <authorList>
            <person name="Silby M.W."/>
            <person name="Cerdeno-Tarraga A.M."/>
            <person name="Vernikos G.S."/>
            <person name="Giddens S.R."/>
            <person name="Jackson R.W."/>
            <person name="Preston G.M."/>
            <person name="Zhang X.-X."/>
            <person name="Moon C.D."/>
            <person name="Gehrig S.M."/>
            <person name="Godfrey S.A.C."/>
            <person name="Knight C.G."/>
            <person name="Malone J.G."/>
            <person name="Robinson Z."/>
            <person name="Spiers A.J."/>
            <person name="Harris S."/>
            <person name="Challis G.L."/>
            <person name="Yaxley A.M."/>
            <person name="Harris D."/>
            <person name="Seeger K."/>
            <person name="Murphy L."/>
            <person name="Rutter S."/>
            <person name="Squares R."/>
            <person name="Quail M.A."/>
            <person name="Saunders E."/>
            <person name="Mavromatis K."/>
            <person name="Brettin T.S."/>
            <person name="Bentley S.D."/>
            <person name="Hothersall J."/>
            <person name="Stephens E."/>
            <person name="Thomas C.M."/>
            <person name="Parkhill J."/>
            <person name="Levy S.B."/>
            <person name="Rainey P.B."/>
            <person name="Thomson N.R."/>
        </authorList>
    </citation>
    <scope>NUCLEOTIDE SEQUENCE [LARGE SCALE GENOMIC DNA]</scope>
    <source>
        <strain>Pf0-1</strain>
    </source>
</reference>
<gene>
    <name evidence="1" type="primary">hisZ</name>
    <name type="ordered locus">Pfl01_0527</name>
</gene>
<keyword id="KW-0028">Amino-acid biosynthesis</keyword>
<keyword id="KW-0963">Cytoplasm</keyword>
<keyword id="KW-0368">Histidine biosynthesis</keyword>
<accession>Q3KIY5</accession>
<comment type="function">
    <text evidence="1">Required for the first step of histidine biosynthesis. May allow the feedback regulation of ATP phosphoribosyltransferase activity by histidine.</text>
</comment>
<comment type="pathway">
    <text evidence="1">Amino-acid biosynthesis; L-histidine biosynthesis; L-histidine from 5-phospho-alpha-D-ribose 1-diphosphate: step 1/9.</text>
</comment>
<comment type="subunit">
    <text evidence="1">Heteromultimer composed of HisG and HisZ subunits.</text>
</comment>
<comment type="subcellular location">
    <subcellularLocation>
        <location evidence="1">Cytoplasm</location>
    </subcellularLocation>
</comment>
<comment type="miscellaneous">
    <text>This function is generally fulfilled by the C-terminal part of HisG, which is missing in some bacteria such as this one.</text>
</comment>
<comment type="similarity">
    <text evidence="1">Belongs to the class-II aminoacyl-tRNA synthetase family. HisZ subfamily.</text>
</comment>
<protein>
    <recommendedName>
        <fullName evidence="1">ATP phosphoribosyltransferase regulatory subunit</fullName>
    </recommendedName>
</protein>
<organism>
    <name type="scientific">Pseudomonas fluorescens (strain Pf0-1)</name>
    <dbReference type="NCBI Taxonomy" id="205922"/>
    <lineage>
        <taxon>Bacteria</taxon>
        <taxon>Pseudomonadati</taxon>
        <taxon>Pseudomonadota</taxon>
        <taxon>Gammaproteobacteria</taxon>
        <taxon>Pseudomonadales</taxon>
        <taxon>Pseudomonadaceae</taxon>
        <taxon>Pseudomonas</taxon>
    </lineage>
</organism>